<name>TRMA_HELHP</name>
<dbReference type="EC" id="2.1.1.-" evidence="1"/>
<dbReference type="EC" id="2.1.1.35" evidence="1"/>
<dbReference type="EMBL" id="AE017125">
    <property type="protein sequence ID" value="AAP77290.1"/>
    <property type="molecule type" value="Genomic_DNA"/>
</dbReference>
<dbReference type="RefSeq" id="WP_011115535.1">
    <property type="nucleotide sequence ID" value="NC_004917.1"/>
</dbReference>
<dbReference type="SMR" id="Q7U326"/>
<dbReference type="STRING" id="235279.HH_0693"/>
<dbReference type="KEGG" id="hhe:HH_0693"/>
<dbReference type="eggNOG" id="COG2265">
    <property type="taxonomic scope" value="Bacteria"/>
</dbReference>
<dbReference type="HOGENOM" id="CLU_043022_0_0_7"/>
<dbReference type="OrthoDB" id="9804590at2"/>
<dbReference type="Proteomes" id="UP000002495">
    <property type="component" value="Chromosome"/>
</dbReference>
<dbReference type="GO" id="GO:0005829">
    <property type="term" value="C:cytosol"/>
    <property type="evidence" value="ECO:0007669"/>
    <property type="project" value="TreeGrafter"/>
</dbReference>
<dbReference type="GO" id="GO:0019843">
    <property type="term" value="F:rRNA binding"/>
    <property type="evidence" value="ECO:0007669"/>
    <property type="project" value="TreeGrafter"/>
</dbReference>
<dbReference type="GO" id="GO:0030697">
    <property type="term" value="F:tRNA (uracil(54)-C5)-methyltransferase activity, S-adenosyl methionine-dependent"/>
    <property type="evidence" value="ECO:0007669"/>
    <property type="project" value="UniProtKB-EC"/>
</dbReference>
<dbReference type="GO" id="GO:0000049">
    <property type="term" value="F:tRNA binding"/>
    <property type="evidence" value="ECO:0007669"/>
    <property type="project" value="TreeGrafter"/>
</dbReference>
<dbReference type="GO" id="GO:0032259">
    <property type="term" value="P:methylation"/>
    <property type="evidence" value="ECO:0007669"/>
    <property type="project" value="UniProtKB-KW"/>
</dbReference>
<dbReference type="GO" id="GO:0008033">
    <property type="term" value="P:tRNA processing"/>
    <property type="evidence" value="ECO:0007669"/>
    <property type="project" value="UniProtKB-KW"/>
</dbReference>
<dbReference type="CDD" id="cd02440">
    <property type="entry name" value="AdoMet_MTases"/>
    <property type="match status" value="1"/>
</dbReference>
<dbReference type="Gene3D" id="2.40.50.1070">
    <property type="match status" value="1"/>
</dbReference>
<dbReference type="Gene3D" id="3.40.50.150">
    <property type="entry name" value="Vaccinia Virus protein VP39"/>
    <property type="match status" value="1"/>
</dbReference>
<dbReference type="HAMAP" id="MF_01011">
    <property type="entry name" value="RNA_methyltr_TrmA"/>
    <property type="match status" value="1"/>
</dbReference>
<dbReference type="InterPro" id="IPR030390">
    <property type="entry name" value="MeTrfase_TrmA_AS"/>
</dbReference>
<dbReference type="InterPro" id="IPR029063">
    <property type="entry name" value="SAM-dependent_MTases_sf"/>
</dbReference>
<dbReference type="InterPro" id="IPR011869">
    <property type="entry name" value="TrmA_MeTrfase"/>
</dbReference>
<dbReference type="InterPro" id="IPR010280">
    <property type="entry name" value="U5_MeTrfase_fam"/>
</dbReference>
<dbReference type="PANTHER" id="PTHR47790">
    <property type="entry name" value="TRNA/TMRNA (URACIL-C(5))-METHYLTRANSFERASE"/>
    <property type="match status" value="1"/>
</dbReference>
<dbReference type="PANTHER" id="PTHR47790:SF2">
    <property type="entry name" value="TRNA_TMRNA (URACIL-C(5))-METHYLTRANSFERASE"/>
    <property type="match status" value="1"/>
</dbReference>
<dbReference type="Pfam" id="PF05958">
    <property type="entry name" value="tRNA_U5-meth_tr"/>
    <property type="match status" value="1"/>
</dbReference>
<dbReference type="SUPFAM" id="SSF53335">
    <property type="entry name" value="S-adenosyl-L-methionine-dependent methyltransferases"/>
    <property type="match status" value="1"/>
</dbReference>
<dbReference type="PROSITE" id="PS51687">
    <property type="entry name" value="SAM_MT_RNA_M5U"/>
    <property type="match status" value="1"/>
</dbReference>
<dbReference type="PROSITE" id="PS01230">
    <property type="entry name" value="TRMA_1"/>
    <property type="match status" value="1"/>
</dbReference>
<comment type="function">
    <text evidence="1">Dual-specificity methyltransferase that catalyzes the formation of 5-methyluridine at position 54 (m5U54) in all tRNAs, and that of position 341 (m5U341) in tmRNA (transfer-mRNA).</text>
</comment>
<comment type="catalytic activity">
    <reaction evidence="1">
        <text>uridine(54) in tRNA + S-adenosyl-L-methionine = 5-methyluridine(54) in tRNA + S-adenosyl-L-homocysteine + H(+)</text>
        <dbReference type="Rhea" id="RHEA:42712"/>
        <dbReference type="Rhea" id="RHEA-COMP:10167"/>
        <dbReference type="Rhea" id="RHEA-COMP:10193"/>
        <dbReference type="ChEBI" id="CHEBI:15378"/>
        <dbReference type="ChEBI" id="CHEBI:57856"/>
        <dbReference type="ChEBI" id="CHEBI:59789"/>
        <dbReference type="ChEBI" id="CHEBI:65315"/>
        <dbReference type="ChEBI" id="CHEBI:74447"/>
        <dbReference type="EC" id="2.1.1.35"/>
    </reaction>
</comment>
<comment type="catalytic activity">
    <reaction evidence="1">
        <text>uridine(341) in tmRNA + S-adenosyl-L-methionine = 5-methyluridine(341) in tmRNA + S-adenosyl-L-homocysteine + H(+)</text>
        <dbReference type="Rhea" id="RHEA:43612"/>
        <dbReference type="Rhea" id="RHEA-COMP:10630"/>
        <dbReference type="Rhea" id="RHEA-COMP:10631"/>
        <dbReference type="ChEBI" id="CHEBI:15378"/>
        <dbReference type="ChEBI" id="CHEBI:57856"/>
        <dbReference type="ChEBI" id="CHEBI:59789"/>
        <dbReference type="ChEBI" id="CHEBI:65315"/>
        <dbReference type="ChEBI" id="CHEBI:74447"/>
    </reaction>
</comment>
<comment type="similarity">
    <text evidence="1">Belongs to the class I-like SAM-binding methyltransferase superfamily. RNA M5U methyltransferase family. TrmA subfamily.</text>
</comment>
<organism>
    <name type="scientific">Helicobacter hepaticus (strain ATCC 51449 / 3B1)</name>
    <dbReference type="NCBI Taxonomy" id="235279"/>
    <lineage>
        <taxon>Bacteria</taxon>
        <taxon>Pseudomonadati</taxon>
        <taxon>Campylobacterota</taxon>
        <taxon>Epsilonproteobacteria</taxon>
        <taxon>Campylobacterales</taxon>
        <taxon>Helicobacteraceae</taxon>
        <taxon>Helicobacter</taxon>
    </lineage>
</organism>
<feature type="chain" id="PRO_0000161984" description="tRNA/tmRNA (uracil-C(5))-methyltransferase">
    <location>
        <begin position="1"/>
        <end position="404"/>
    </location>
</feature>
<feature type="active site" description="Nucleophile" evidence="1">
    <location>
        <position position="358"/>
    </location>
</feature>
<feature type="active site" description="Proton acceptor" evidence="1">
    <location>
        <position position="392"/>
    </location>
</feature>
<feature type="binding site" evidence="1">
    <location>
        <position position="218"/>
    </location>
    <ligand>
        <name>S-adenosyl-L-methionine</name>
        <dbReference type="ChEBI" id="CHEBI:59789"/>
    </ligand>
</feature>
<feature type="binding site" evidence="1">
    <location>
        <position position="251"/>
    </location>
    <ligand>
        <name>S-adenosyl-L-methionine</name>
        <dbReference type="ChEBI" id="CHEBI:59789"/>
    </ligand>
</feature>
<feature type="binding site" evidence="1">
    <location>
        <position position="256"/>
    </location>
    <ligand>
        <name>S-adenosyl-L-methionine</name>
        <dbReference type="ChEBI" id="CHEBI:59789"/>
    </ligand>
</feature>
<feature type="binding site" evidence="1">
    <location>
        <position position="272"/>
    </location>
    <ligand>
        <name>S-adenosyl-L-methionine</name>
        <dbReference type="ChEBI" id="CHEBI:59789"/>
    </ligand>
</feature>
<feature type="binding site" evidence="1">
    <location>
        <position position="332"/>
    </location>
    <ligand>
        <name>S-adenosyl-L-methionine</name>
        <dbReference type="ChEBI" id="CHEBI:59789"/>
    </ligand>
</feature>
<evidence type="ECO:0000255" key="1">
    <source>
        <dbReference type="HAMAP-Rule" id="MF_01011"/>
    </source>
</evidence>
<gene>
    <name evidence="1" type="primary">trmA</name>
    <name type="ordered locus">HH_0693</name>
</gene>
<protein>
    <recommendedName>
        <fullName evidence="1">tRNA/tmRNA (uracil-C(5))-methyltransferase</fullName>
        <ecNumber evidence="1">2.1.1.-</ecNumber>
        <ecNumber evidence="1">2.1.1.35</ecNumber>
    </recommendedName>
    <alternativeName>
        <fullName evidence="1">tRNA (uracil(54)-C(5))-methyltransferase</fullName>
    </alternativeName>
    <alternativeName>
        <fullName evidence="1">tRNA(m5U54)-methyltransferase</fullName>
        <shortName evidence="1">RUMT</shortName>
    </alternativeName>
    <alternativeName>
        <fullName evidence="1">tmRNA (uracil(341)-C(5))-methyltransferase</fullName>
    </alternativeName>
</protein>
<keyword id="KW-0489">Methyltransferase</keyword>
<keyword id="KW-1185">Reference proteome</keyword>
<keyword id="KW-0949">S-adenosyl-L-methionine</keyword>
<keyword id="KW-0808">Transferase</keyword>
<keyword id="KW-0819">tRNA processing</keyword>
<reference key="1">
    <citation type="journal article" date="2003" name="Proc. Natl. Acad. Sci. U.S.A.">
        <title>The complete genome sequence of the carcinogenic bacterium Helicobacter hepaticus.</title>
        <authorList>
            <person name="Suerbaum S."/>
            <person name="Josenhans C."/>
            <person name="Sterzenbach T."/>
            <person name="Drescher B."/>
            <person name="Brandt P."/>
            <person name="Bell M."/>
            <person name="Droege M."/>
            <person name="Fartmann B."/>
            <person name="Fischer H.-P."/>
            <person name="Ge Z."/>
            <person name="Hoerster A."/>
            <person name="Holland R."/>
            <person name="Klein K."/>
            <person name="Koenig J."/>
            <person name="Macko L."/>
            <person name="Mendz G.L."/>
            <person name="Nyakatura G."/>
            <person name="Schauer D.B."/>
            <person name="Shen Z."/>
            <person name="Weber J."/>
            <person name="Frosch M."/>
            <person name="Fox J.G."/>
        </authorList>
    </citation>
    <scope>NUCLEOTIDE SEQUENCE [LARGE SCALE GENOMIC DNA]</scope>
    <source>
        <strain>ATCC 51449 / 3B1</strain>
    </source>
</reference>
<proteinExistence type="inferred from homology"/>
<sequence>MNCEHFGICGGCTNIQDYSTQLQAKHNLTLQEFQSFLDTKSKNFQYPTNPLAIEVFASPQEGFRARAEFRFSHVFQNKSGLDFAMNAFGYNHRVPIKKCPILLPTLQDIMPLLLHYLNTYDLLNHKLYACNLLSSLQNEIIITLIYHKSLDSHWESLALKIQKELEYTLNTNIHIIGRSKNHKHILSNDIICEHLTLFANTPKERTYTFFKQESRFCQPNPFINTQMLEFIVSALSSIYTPQTPCDMLELYCGSGNFTIPLASIFRHIFATEVVKSAITLLQKNMAKNNIENIIPARLNAFESIQALRKERVFFRLKNIDLDAFAFDCVLIDPPRSGVGEEEVLYFLQNFNTIIYVSCNPHTLLNDLRILSQSHYVMRFGLFDQFPHTYHRECIVILRKSNKIL</sequence>
<accession>Q7U326</accession>